<comment type="function">
    <text evidence="1">Part of the ACTR1A/ACTB filament around which the dynactin complex is built. The dynactin multiprotein complex activates the molecular motor dynein for ultra-processive transport along microtubules.</text>
</comment>
<comment type="subunit">
    <text evidence="1 2">Part of the ACTR1A/ACTB filament around which the dynactin complex is built. The filament contains 8 copies of ACTR1A and 1 ACTB. Interacts with dynein and adapters such as BICD2 (By similarity). Interacts with BCCIP (isoform 2/alpha) (By similarity).</text>
</comment>
<comment type="subcellular location">
    <subcellularLocation>
        <location evidence="4">Cytoplasm</location>
        <location evidence="4">Cytoskeleton</location>
    </subcellularLocation>
    <subcellularLocation>
        <location evidence="2">Cytoplasm</location>
        <location evidence="2">Cytoskeleton</location>
        <location evidence="2">Microtubule organizing center</location>
        <location evidence="2">Centrosome</location>
    </subcellularLocation>
    <subcellularLocation>
        <location evidence="2">Cytoplasm</location>
        <location evidence="2">Cell cortex</location>
    </subcellularLocation>
</comment>
<comment type="similarity">
    <text evidence="3">Belongs to the actin family. ARP1 subfamily.</text>
</comment>
<keyword id="KW-0007">Acetylation</keyword>
<keyword id="KW-0067">ATP-binding</keyword>
<keyword id="KW-0963">Cytoplasm</keyword>
<keyword id="KW-0206">Cytoskeleton</keyword>
<keyword id="KW-0547">Nucleotide-binding</keyword>
<keyword id="KW-1185">Reference proteome</keyword>
<sequence>MESYDVIANQPVVIDNGSGVIKAGFAGDQIPKYCFPNYVGRPKHVRVMAGALEGDIFIGPKAEEHRGLLSIRYPMEHGIVKDWNDMERIWQYVYSKDQLQTFSEEHPVLLTEAPLNPRKNRERAAEVFFETFNVPALFISMQAVLSLYATGRTTGVVLDSGDGVTHAVPIYEGFAMPHSIMRIDIAGRDVSRFLRLYLRKEGYDFHSSSEFEIVKAIKERACYLSINPQKDETLETEKAQYYLPDGSTIEIGPSRFRAPELLFRPDLIGEESEGIHEVLVFAIQKSDMDLRRTLFSNIVLSGGSTLFKGFGDRLLSEVKKLAPKDVKIRISAPQERLYSTWIGGSILASLDTFKKMWVSKKEYEEDGARSIHRKTF</sequence>
<gene>
    <name evidence="2" type="primary">Actr1a</name>
    <name evidence="2" type="synonym">Ctrn1</name>
</gene>
<evidence type="ECO:0000250" key="1">
    <source>
        <dbReference type="UniProtKB" id="F2Z5G5"/>
    </source>
</evidence>
<evidence type="ECO:0000250" key="2">
    <source>
        <dbReference type="UniProtKB" id="P61163"/>
    </source>
</evidence>
<evidence type="ECO:0000255" key="3"/>
<evidence type="ECO:0000269" key="4">
    <source>
    </source>
</evidence>
<reference key="1">
    <citation type="journal article" date="2004" name="Nature">
        <title>Genome sequence of the Brown Norway rat yields insights into mammalian evolution.</title>
        <authorList>
            <person name="Gibbs R.A."/>
            <person name="Weinstock G.M."/>
            <person name="Metzker M.L."/>
            <person name="Muzny D.M."/>
            <person name="Sodergren E.J."/>
            <person name="Scherer S."/>
            <person name="Scott G."/>
            <person name="Steffen D."/>
            <person name="Worley K.C."/>
            <person name="Burch P.E."/>
            <person name="Okwuonu G."/>
            <person name="Hines S."/>
            <person name="Lewis L."/>
            <person name="Deramo C."/>
            <person name="Delgado O."/>
            <person name="Dugan-Rocha S."/>
            <person name="Miner G."/>
            <person name="Morgan M."/>
            <person name="Hawes A."/>
            <person name="Gill R."/>
            <person name="Holt R.A."/>
            <person name="Adams M.D."/>
            <person name="Amanatides P.G."/>
            <person name="Baden-Tillson H."/>
            <person name="Barnstead M."/>
            <person name="Chin S."/>
            <person name="Evans C.A."/>
            <person name="Ferriera S."/>
            <person name="Fosler C."/>
            <person name="Glodek A."/>
            <person name="Gu Z."/>
            <person name="Jennings D."/>
            <person name="Kraft C.L."/>
            <person name="Nguyen T."/>
            <person name="Pfannkoch C.M."/>
            <person name="Sitter C."/>
            <person name="Sutton G.G."/>
            <person name="Venter J.C."/>
            <person name="Woodage T."/>
            <person name="Smith D."/>
            <person name="Lee H.-M."/>
            <person name="Gustafson E."/>
            <person name="Cahill P."/>
            <person name="Kana A."/>
            <person name="Doucette-Stamm L."/>
            <person name="Weinstock K."/>
            <person name="Fechtel K."/>
            <person name="Weiss R.B."/>
            <person name="Dunn D.M."/>
            <person name="Green E.D."/>
            <person name="Blakesley R.W."/>
            <person name="Bouffard G.G."/>
            <person name="De Jong P.J."/>
            <person name="Osoegawa K."/>
            <person name="Zhu B."/>
            <person name="Marra M."/>
            <person name="Schein J."/>
            <person name="Bosdet I."/>
            <person name="Fjell C."/>
            <person name="Jones S."/>
            <person name="Krzywinski M."/>
            <person name="Mathewson C."/>
            <person name="Siddiqui A."/>
            <person name="Wye N."/>
            <person name="McPherson J."/>
            <person name="Zhao S."/>
            <person name="Fraser C.M."/>
            <person name="Shetty J."/>
            <person name="Shatsman S."/>
            <person name="Geer K."/>
            <person name="Chen Y."/>
            <person name="Abramzon S."/>
            <person name="Nierman W.C."/>
            <person name="Havlak P.H."/>
            <person name="Chen R."/>
            <person name="Durbin K.J."/>
            <person name="Egan A."/>
            <person name="Ren Y."/>
            <person name="Song X.-Z."/>
            <person name="Li B."/>
            <person name="Liu Y."/>
            <person name="Qin X."/>
            <person name="Cawley S."/>
            <person name="Cooney A.J."/>
            <person name="D'Souza L.M."/>
            <person name="Martin K."/>
            <person name="Wu J.Q."/>
            <person name="Gonzalez-Garay M.L."/>
            <person name="Jackson A.R."/>
            <person name="Kalafus K.J."/>
            <person name="McLeod M.P."/>
            <person name="Milosavljevic A."/>
            <person name="Virk D."/>
            <person name="Volkov A."/>
            <person name="Wheeler D.A."/>
            <person name="Zhang Z."/>
            <person name="Bailey J.A."/>
            <person name="Eichler E.E."/>
            <person name="Tuzun E."/>
            <person name="Birney E."/>
            <person name="Mongin E."/>
            <person name="Ureta-Vidal A."/>
            <person name="Woodwark C."/>
            <person name="Zdobnov E."/>
            <person name="Bork P."/>
            <person name="Suyama M."/>
            <person name="Torrents D."/>
            <person name="Alexandersson M."/>
            <person name="Trask B.J."/>
            <person name="Young J.M."/>
            <person name="Huang H."/>
            <person name="Wang H."/>
            <person name="Xing H."/>
            <person name="Daniels S."/>
            <person name="Gietzen D."/>
            <person name="Schmidt J."/>
            <person name="Stevens K."/>
            <person name="Vitt U."/>
            <person name="Wingrove J."/>
            <person name="Camara F."/>
            <person name="Mar Alba M."/>
            <person name="Abril J.F."/>
            <person name="Guigo R."/>
            <person name="Smit A."/>
            <person name="Dubchak I."/>
            <person name="Rubin E.M."/>
            <person name="Couronne O."/>
            <person name="Poliakov A."/>
            <person name="Huebner N."/>
            <person name="Ganten D."/>
            <person name="Goesele C."/>
            <person name="Hummel O."/>
            <person name="Kreitler T."/>
            <person name="Lee Y.-A."/>
            <person name="Monti J."/>
            <person name="Schulz H."/>
            <person name="Zimdahl H."/>
            <person name="Himmelbauer H."/>
            <person name="Lehrach H."/>
            <person name="Jacob H.J."/>
            <person name="Bromberg S."/>
            <person name="Gullings-Handley J."/>
            <person name="Jensen-Seaman M.I."/>
            <person name="Kwitek A.E."/>
            <person name="Lazar J."/>
            <person name="Pasko D."/>
            <person name="Tonellato P.J."/>
            <person name="Twigger S."/>
            <person name="Ponting C.P."/>
            <person name="Duarte J.M."/>
            <person name="Rice S."/>
            <person name="Goodstadt L."/>
            <person name="Beatson S.A."/>
            <person name="Emes R.D."/>
            <person name="Winter E.E."/>
            <person name="Webber C."/>
            <person name="Brandt P."/>
            <person name="Nyakatura G."/>
            <person name="Adetobi M."/>
            <person name="Chiaromonte F."/>
            <person name="Elnitski L."/>
            <person name="Eswara P."/>
            <person name="Hardison R.C."/>
            <person name="Hou M."/>
            <person name="Kolbe D."/>
            <person name="Makova K."/>
            <person name="Miller W."/>
            <person name="Nekrutenko A."/>
            <person name="Riemer C."/>
            <person name="Schwartz S."/>
            <person name="Taylor J."/>
            <person name="Yang S."/>
            <person name="Zhang Y."/>
            <person name="Lindpaintner K."/>
            <person name="Andrews T.D."/>
            <person name="Caccamo M."/>
            <person name="Clamp M."/>
            <person name="Clarke L."/>
            <person name="Curwen V."/>
            <person name="Durbin R.M."/>
            <person name="Eyras E."/>
            <person name="Searle S.M."/>
            <person name="Cooper G.M."/>
            <person name="Batzoglou S."/>
            <person name="Brudno M."/>
            <person name="Sidow A."/>
            <person name="Stone E.A."/>
            <person name="Payseur B.A."/>
            <person name="Bourque G."/>
            <person name="Lopez-Otin C."/>
            <person name="Puente X.S."/>
            <person name="Chakrabarti K."/>
            <person name="Chatterji S."/>
            <person name="Dewey C."/>
            <person name="Pachter L."/>
            <person name="Bray N."/>
            <person name="Yap V.B."/>
            <person name="Caspi A."/>
            <person name="Tesler G."/>
            <person name="Pevzner P.A."/>
            <person name="Haussler D."/>
            <person name="Roskin K.M."/>
            <person name="Baertsch R."/>
            <person name="Clawson H."/>
            <person name="Furey T.S."/>
            <person name="Hinrichs A.S."/>
            <person name="Karolchik D."/>
            <person name="Kent W.J."/>
            <person name="Rosenbloom K.R."/>
            <person name="Trumbower H."/>
            <person name="Weirauch M."/>
            <person name="Cooper D.N."/>
            <person name="Stenson P.D."/>
            <person name="Ma B."/>
            <person name="Brent M."/>
            <person name="Arumugam M."/>
            <person name="Shteynberg D."/>
            <person name="Copley R.R."/>
            <person name="Taylor M.S."/>
            <person name="Riethman H."/>
            <person name="Mudunuri U."/>
            <person name="Peterson J."/>
            <person name="Guyer M."/>
            <person name="Felsenfeld A."/>
            <person name="Old S."/>
            <person name="Mockrin S."/>
            <person name="Collins F.S."/>
        </authorList>
    </citation>
    <scope>NUCLEOTIDE SEQUENCE [LARGE SCALE GENOMIC DNA]</scope>
    <source>
        <strain>Brown Norway</strain>
    </source>
</reference>
<reference key="2">
    <citation type="journal article" date="2009" name="Proteomics">
        <title>Proteome profile of the mature rat olfactory bulb.</title>
        <authorList>
            <person name="Maurya D.K."/>
            <person name="Sundaram C.S."/>
            <person name="Bhargava P."/>
        </authorList>
    </citation>
    <scope>IDENTIFICATION BY MASS SPECTROMETRY</scope>
    <scope>SUBCELLULAR LOCATION</scope>
</reference>
<feature type="chain" id="PRO_0000328940" description="Alpha-centractin">
    <location>
        <begin position="1"/>
        <end position="376"/>
    </location>
</feature>
<feature type="modified residue" description="N-acetylmethionine" evidence="2">
    <location>
        <position position="1"/>
    </location>
</feature>
<proteinExistence type="evidence at protein level"/>
<organism>
    <name type="scientific">Rattus norvegicus</name>
    <name type="common">Rat</name>
    <dbReference type="NCBI Taxonomy" id="10116"/>
    <lineage>
        <taxon>Eukaryota</taxon>
        <taxon>Metazoa</taxon>
        <taxon>Chordata</taxon>
        <taxon>Craniata</taxon>
        <taxon>Vertebrata</taxon>
        <taxon>Euteleostomi</taxon>
        <taxon>Mammalia</taxon>
        <taxon>Eutheria</taxon>
        <taxon>Euarchontoglires</taxon>
        <taxon>Glires</taxon>
        <taxon>Rodentia</taxon>
        <taxon>Myomorpha</taxon>
        <taxon>Muroidea</taxon>
        <taxon>Muridae</taxon>
        <taxon>Murinae</taxon>
        <taxon>Rattus</taxon>
    </lineage>
</organism>
<dbReference type="EMBL" id="AC096363">
    <property type="status" value="NOT_ANNOTATED_CDS"/>
    <property type="molecule type" value="Genomic_DNA"/>
</dbReference>
<dbReference type="RefSeq" id="NP_001099834.1">
    <property type="nucleotide sequence ID" value="NM_001106364.1"/>
</dbReference>
<dbReference type="RefSeq" id="XP_063143335.1">
    <property type="nucleotide sequence ID" value="XM_063287265.1"/>
</dbReference>
<dbReference type="SMR" id="P85515"/>
<dbReference type="BioGRID" id="254541">
    <property type="interactions" value="7"/>
</dbReference>
<dbReference type="FunCoup" id="P85515">
    <property type="interactions" value="3289"/>
</dbReference>
<dbReference type="IntAct" id="P85515">
    <property type="interactions" value="5"/>
</dbReference>
<dbReference type="MINT" id="P85515"/>
<dbReference type="STRING" id="10116.ENSRNOP00000026792"/>
<dbReference type="iPTMnet" id="P85515"/>
<dbReference type="PhosphoSitePlus" id="P85515"/>
<dbReference type="jPOST" id="P85515"/>
<dbReference type="PaxDb" id="10116-ENSRNOP00000026792"/>
<dbReference type="GeneID" id="294010"/>
<dbReference type="KEGG" id="rno:294010"/>
<dbReference type="UCSC" id="RGD:1307025">
    <property type="organism name" value="rat"/>
</dbReference>
<dbReference type="AGR" id="RGD:1307025"/>
<dbReference type="CTD" id="10121"/>
<dbReference type="RGD" id="1307025">
    <property type="gene designation" value="Actr1a"/>
</dbReference>
<dbReference type="VEuPathDB" id="HostDB:ENSRNOG00000019725"/>
<dbReference type="eggNOG" id="KOG0676">
    <property type="taxonomic scope" value="Eukaryota"/>
</dbReference>
<dbReference type="HOGENOM" id="CLU_027965_0_1_1"/>
<dbReference type="InParanoid" id="P85515"/>
<dbReference type="PhylomeDB" id="P85515"/>
<dbReference type="TreeFam" id="TF300420"/>
<dbReference type="Reactome" id="R-RNO-2132295">
    <property type="pathway name" value="MHC class II antigen presentation"/>
</dbReference>
<dbReference type="Reactome" id="R-RNO-2565942">
    <property type="pathway name" value="Regulation of PLK1 Activity at G2/M Transition"/>
</dbReference>
<dbReference type="Reactome" id="R-RNO-3371497">
    <property type="pathway name" value="HSP90 chaperone cycle for steroid hormone receptors (SHR) in the presence of ligand"/>
</dbReference>
<dbReference type="Reactome" id="R-RNO-380259">
    <property type="pathway name" value="Loss of Nlp from mitotic centrosomes"/>
</dbReference>
<dbReference type="Reactome" id="R-RNO-380270">
    <property type="pathway name" value="Recruitment of mitotic centrosome proteins and complexes"/>
</dbReference>
<dbReference type="Reactome" id="R-RNO-380284">
    <property type="pathway name" value="Loss of proteins required for interphase microtubule organization from the centrosome"/>
</dbReference>
<dbReference type="Reactome" id="R-RNO-380320">
    <property type="pathway name" value="Recruitment of NuMA to mitotic centrosomes"/>
</dbReference>
<dbReference type="Reactome" id="R-RNO-5620912">
    <property type="pathway name" value="Anchoring of the basal body to the plasma membrane"/>
</dbReference>
<dbReference type="Reactome" id="R-RNO-6807878">
    <property type="pathway name" value="COPI-mediated anterograde transport"/>
</dbReference>
<dbReference type="Reactome" id="R-RNO-6811436">
    <property type="pathway name" value="COPI-independent Golgi-to-ER retrograde traffic"/>
</dbReference>
<dbReference type="Reactome" id="R-RNO-8854518">
    <property type="pathway name" value="AURKA Activation by TPX2"/>
</dbReference>
<dbReference type="PRO" id="PR:P85515"/>
<dbReference type="Proteomes" id="UP000002494">
    <property type="component" value="Chromosome 1"/>
</dbReference>
<dbReference type="Bgee" id="ENSRNOG00000019725">
    <property type="expression patterns" value="Expressed in frontal cortex and 19 other cell types or tissues"/>
</dbReference>
<dbReference type="GO" id="GO:0005938">
    <property type="term" value="C:cell cortex"/>
    <property type="evidence" value="ECO:0000266"/>
    <property type="project" value="RGD"/>
</dbReference>
<dbReference type="GO" id="GO:0005814">
    <property type="term" value="C:centriole"/>
    <property type="evidence" value="ECO:0000314"/>
    <property type="project" value="RGD"/>
</dbReference>
<dbReference type="GO" id="GO:0005813">
    <property type="term" value="C:centrosome"/>
    <property type="evidence" value="ECO:0000266"/>
    <property type="project" value="RGD"/>
</dbReference>
<dbReference type="GO" id="GO:0030137">
    <property type="term" value="C:COPI-coated vesicle"/>
    <property type="evidence" value="ECO:0000314"/>
    <property type="project" value="RGD"/>
</dbReference>
<dbReference type="GO" id="GO:0005869">
    <property type="term" value="C:dynactin complex"/>
    <property type="evidence" value="ECO:0000318"/>
    <property type="project" value="GO_Central"/>
</dbReference>
<dbReference type="GO" id="GO:0002177">
    <property type="term" value="C:manchette"/>
    <property type="evidence" value="ECO:0000314"/>
    <property type="project" value="RGD"/>
</dbReference>
<dbReference type="GO" id="GO:0005524">
    <property type="term" value="F:ATP binding"/>
    <property type="evidence" value="ECO:0007669"/>
    <property type="project" value="UniProtKB-KW"/>
</dbReference>
<dbReference type="GO" id="GO:0007283">
    <property type="term" value="P:spermatogenesis"/>
    <property type="evidence" value="ECO:0000270"/>
    <property type="project" value="RGD"/>
</dbReference>
<dbReference type="CDD" id="cd10216">
    <property type="entry name" value="ASKHA_NBD_Arp1"/>
    <property type="match status" value="1"/>
</dbReference>
<dbReference type="FunFam" id="3.30.420.40:FF:000188">
    <property type="entry name" value="Actin like 6B"/>
    <property type="match status" value="2"/>
</dbReference>
<dbReference type="FunFam" id="3.90.640.10:FF:000008">
    <property type="entry name" value="alpha-centractin isoform X1"/>
    <property type="match status" value="1"/>
</dbReference>
<dbReference type="Gene3D" id="3.30.420.40">
    <property type="match status" value="2"/>
</dbReference>
<dbReference type="Gene3D" id="3.90.640.10">
    <property type="entry name" value="Actin, Chain A, domain 4"/>
    <property type="match status" value="1"/>
</dbReference>
<dbReference type="InterPro" id="IPR004000">
    <property type="entry name" value="Actin"/>
</dbReference>
<dbReference type="InterPro" id="IPR020902">
    <property type="entry name" value="Actin/actin-like_CS"/>
</dbReference>
<dbReference type="InterPro" id="IPR004001">
    <property type="entry name" value="Actin_CS"/>
</dbReference>
<dbReference type="InterPro" id="IPR043129">
    <property type="entry name" value="ATPase_NBD"/>
</dbReference>
<dbReference type="PANTHER" id="PTHR11937">
    <property type="entry name" value="ACTIN"/>
    <property type="match status" value="1"/>
</dbReference>
<dbReference type="Pfam" id="PF00022">
    <property type="entry name" value="Actin"/>
    <property type="match status" value="1"/>
</dbReference>
<dbReference type="PRINTS" id="PR00190">
    <property type="entry name" value="ACTIN"/>
</dbReference>
<dbReference type="SMART" id="SM00268">
    <property type="entry name" value="ACTIN"/>
    <property type="match status" value="1"/>
</dbReference>
<dbReference type="SUPFAM" id="SSF53067">
    <property type="entry name" value="Actin-like ATPase domain"/>
    <property type="match status" value="2"/>
</dbReference>
<dbReference type="PROSITE" id="PS00432">
    <property type="entry name" value="ACTINS_2"/>
    <property type="match status" value="1"/>
</dbReference>
<dbReference type="PROSITE" id="PS01132">
    <property type="entry name" value="ACTINS_ACT_LIKE"/>
    <property type="match status" value="1"/>
</dbReference>
<name>ACTZ_RAT</name>
<accession>P85515</accession>
<protein>
    <recommendedName>
        <fullName>Alpha-centractin</fullName>
        <shortName>Centractin</shortName>
    </recommendedName>
</protein>